<keyword id="KW-0963">Cytoplasm</keyword>
<keyword id="KW-0690">Ribosome biogenesis</keyword>
<gene>
    <name evidence="1" type="primary">rimP</name>
    <name type="ordered locus">Mrad2831_3730</name>
</gene>
<sequence>MSSEIEADLSEKRLVREAGVAARVAQAIEGPLAGLGFRLVRVRMSNVNGCTVQIMAERPDGTFTIDDCEAVSRAISPILDVDDPVGGAYNLEVSSPGIDRPLVRVSDFARWAGYEAKVELSPPLDGRKRFRGILGAPDPTGTTVPIDLPDVKEGLPSRIDLPLKDLAEAHLVLTDELIRESLRRGGPPAADEADEAEEAEDEEVAAESASSPARAPFQPKGPRKASPAAKPQKQARTGPKKPVVTKASRLKDRDSLH</sequence>
<feature type="chain" id="PRO_0000384705" description="Ribosome maturation factor RimP">
    <location>
        <begin position="1"/>
        <end position="257"/>
    </location>
</feature>
<feature type="region of interest" description="Disordered" evidence="2">
    <location>
        <begin position="182"/>
        <end position="257"/>
    </location>
</feature>
<feature type="compositionally biased region" description="Acidic residues" evidence="2">
    <location>
        <begin position="191"/>
        <end position="205"/>
    </location>
</feature>
<feature type="compositionally biased region" description="Low complexity" evidence="2">
    <location>
        <begin position="224"/>
        <end position="236"/>
    </location>
</feature>
<accession>B1LX00</accession>
<organism>
    <name type="scientific">Methylobacterium radiotolerans (strain ATCC 27329 / DSM 1819 / JCM 2831 / NBRC 15690 / NCIMB 10815 / 0-1)</name>
    <dbReference type="NCBI Taxonomy" id="426355"/>
    <lineage>
        <taxon>Bacteria</taxon>
        <taxon>Pseudomonadati</taxon>
        <taxon>Pseudomonadota</taxon>
        <taxon>Alphaproteobacteria</taxon>
        <taxon>Hyphomicrobiales</taxon>
        <taxon>Methylobacteriaceae</taxon>
        <taxon>Methylobacterium</taxon>
    </lineage>
</organism>
<comment type="function">
    <text evidence="1">Required for maturation of 30S ribosomal subunits.</text>
</comment>
<comment type="subcellular location">
    <subcellularLocation>
        <location evidence="1">Cytoplasm</location>
    </subcellularLocation>
</comment>
<comment type="similarity">
    <text evidence="1">Belongs to the RimP family.</text>
</comment>
<name>RIMP_METRJ</name>
<proteinExistence type="inferred from homology"/>
<reference key="1">
    <citation type="submission" date="2008-03" db="EMBL/GenBank/DDBJ databases">
        <title>Complete sequence of chromosome of Methylobacterium radiotolerans JCM 2831.</title>
        <authorList>
            <consortium name="US DOE Joint Genome Institute"/>
            <person name="Copeland A."/>
            <person name="Lucas S."/>
            <person name="Lapidus A."/>
            <person name="Glavina del Rio T."/>
            <person name="Dalin E."/>
            <person name="Tice H."/>
            <person name="Bruce D."/>
            <person name="Goodwin L."/>
            <person name="Pitluck S."/>
            <person name="Kiss H."/>
            <person name="Brettin T."/>
            <person name="Detter J.C."/>
            <person name="Han C."/>
            <person name="Kuske C.R."/>
            <person name="Schmutz J."/>
            <person name="Larimer F."/>
            <person name="Land M."/>
            <person name="Hauser L."/>
            <person name="Kyrpides N."/>
            <person name="Mikhailova N."/>
            <person name="Marx C.J."/>
            <person name="Richardson P."/>
        </authorList>
    </citation>
    <scope>NUCLEOTIDE SEQUENCE [LARGE SCALE GENOMIC DNA]</scope>
    <source>
        <strain>ATCC 27329 / DSM 1819 / JCM 2831 / NBRC 15690 / NCIMB 10815 / 0-1</strain>
    </source>
</reference>
<dbReference type="EMBL" id="CP001001">
    <property type="protein sequence ID" value="ACB25705.1"/>
    <property type="molecule type" value="Genomic_DNA"/>
</dbReference>
<dbReference type="RefSeq" id="WP_012320664.1">
    <property type="nucleotide sequence ID" value="NC_010505.1"/>
</dbReference>
<dbReference type="SMR" id="B1LX00"/>
<dbReference type="STRING" id="426355.Mrad2831_3730"/>
<dbReference type="GeneID" id="6139783"/>
<dbReference type="KEGG" id="mrd:Mrad2831_3730"/>
<dbReference type="eggNOG" id="COG0779">
    <property type="taxonomic scope" value="Bacteria"/>
</dbReference>
<dbReference type="HOGENOM" id="CLU_070525_0_0_5"/>
<dbReference type="OrthoDB" id="9805006at2"/>
<dbReference type="Proteomes" id="UP000006589">
    <property type="component" value="Chromosome"/>
</dbReference>
<dbReference type="GO" id="GO:0005829">
    <property type="term" value="C:cytosol"/>
    <property type="evidence" value="ECO:0007669"/>
    <property type="project" value="TreeGrafter"/>
</dbReference>
<dbReference type="GO" id="GO:0000028">
    <property type="term" value="P:ribosomal small subunit assembly"/>
    <property type="evidence" value="ECO:0007669"/>
    <property type="project" value="TreeGrafter"/>
</dbReference>
<dbReference type="GO" id="GO:0006412">
    <property type="term" value="P:translation"/>
    <property type="evidence" value="ECO:0007669"/>
    <property type="project" value="TreeGrafter"/>
</dbReference>
<dbReference type="CDD" id="cd01734">
    <property type="entry name" value="YlxS_C"/>
    <property type="match status" value="1"/>
</dbReference>
<dbReference type="Gene3D" id="3.30.300.70">
    <property type="entry name" value="RimP-like superfamily, N-terminal"/>
    <property type="match status" value="1"/>
</dbReference>
<dbReference type="HAMAP" id="MF_01077">
    <property type="entry name" value="RimP"/>
    <property type="match status" value="1"/>
</dbReference>
<dbReference type="InterPro" id="IPR003728">
    <property type="entry name" value="Ribosome_maturation_RimP"/>
</dbReference>
<dbReference type="InterPro" id="IPR028998">
    <property type="entry name" value="RimP_C"/>
</dbReference>
<dbReference type="InterPro" id="IPR036847">
    <property type="entry name" value="RimP_C_sf"/>
</dbReference>
<dbReference type="InterPro" id="IPR028989">
    <property type="entry name" value="RimP_N"/>
</dbReference>
<dbReference type="InterPro" id="IPR035956">
    <property type="entry name" value="RimP_N_sf"/>
</dbReference>
<dbReference type="NCBIfam" id="NF000932">
    <property type="entry name" value="PRK00092.2-5"/>
    <property type="match status" value="1"/>
</dbReference>
<dbReference type="PANTHER" id="PTHR33867">
    <property type="entry name" value="RIBOSOME MATURATION FACTOR RIMP"/>
    <property type="match status" value="1"/>
</dbReference>
<dbReference type="PANTHER" id="PTHR33867:SF1">
    <property type="entry name" value="RIBOSOME MATURATION FACTOR RIMP"/>
    <property type="match status" value="1"/>
</dbReference>
<dbReference type="Pfam" id="PF17384">
    <property type="entry name" value="DUF150_C"/>
    <property type="match status" value="1"/>
</dbReference>
<dbReference type="Pfam" id="PF02576">
    <property type="entry name" value="RimP_N"/>
    <property type="match status" value="1"/>
</dbReference>
<dbReference type="SUPFAM" id="SSF74942">
    <property type="entry name" value="YhbC-like, C-terminal domain"/>
    <property type="match status" value="1"/>
</dbReference>
<dbReference type="SUPFAM" id="SSF75420">
    <property type="entry name" value="YhbC-like, N-terminal domain"/>
    <property type="match status" value="1"/>
</dbReference>
<protein>
    <recommendedName>
        <fullName evidence="1">Ribosome maturation factor RimP</fullName>
    </recommendedName>
</protein>
<evidence type="ECO:0000255" key="1">
    <source>
        <dbReference type="HAMAP-Rule" id="MF_01077"/>
    </source>
</evidence>
<evidence type="ECO:0000256" key="2">
    <source>
        <dbReference type="SAM" id="MobiDB-lite"/>
    </source>
</evidence>